<evidence type="ECO:0000255" key="1">
    <source>
        <dbReference type="HAMAP-Rule" id="MF_00441"/>
    </source>
</evidence>
<feature type="propeptide" id="PRO_0000276168" evidence="1">
    <location>
        <begin position="1"/>
        <end position="22"/>
    </location>
</feature>
<feature type="chain" id="PRO_0000276169" description="Photosystem II reaction center protein K" evidence="1">
    <location>
        <begin position="23"/>
        <end position="59"/>
    </location>
</feature>
<feature type="transmembrane region" description="Helical" evidence="1">
    <location>
        <begin position="38"/>
        <end position="58"/>
    </location>
</feature>
<sequence>MLNIFSLICLSSALHSSSFFFAKLPEAYALFNPIVDVMPVIPVLFFLLALVWQAAVSFR</sequence>
<protein>
    <recommendedName>
        <fullName evidence="1">Photosystem II reaction center protein K</fullName>
        <shortName evidence="1">PSII-K</shortName>
    </recommendedName>
</protein>
<proteinExistence type="inferred from homology"/>
<comment type="function">
    <text evidence="1">One of the components of the core complex of photosystem II (PSII). PSII is a light-driven water:plastoquinone oxidoreductase that uses light energy to abstract electrons from H(2)O, generating O(2) and a proton gradient subsequently used for ATP formation. It consists of a core antenna complex that captures photons, and an electron transfer chain that converts photonic excitation into a charge separation.</text>
</comment>
<comment type="subunit">
    <text evidence="1">PSII is composed of 1 copy each of membrane proteins PsbA, PsbB, PsbC, PsbD, PsbE, PsbF, PsbH, PsbI, PsbJ, PsbK, PsbL, PsbM, PsbT, PsbX, PsbY, PsbZ, Psb30/Ycf12, at least 3 peripheral proteins of the oxygen-evolving complex and a large number of cofactors. It forms dimeric complexes.</text>
</comment>
<comment type="subcellular location">
    <subcellularLocation>
        <location evidence="1">Plastid</location>
        <location evidence="1">Chloroplast thylakoid membrane</location>
        <topology evidence="1">Single-pass membrane protein</topology>
    </subcellularLocation>
</comment>
<comment type="similarity">
    <text evidence="1">Belongs to the PsbK family.</text>
</comment>
<organism>
    <name type="scientific">Piper cenocladum</name>
    <name type="common">Ant piper</name>
    <dbReference type="NCBI Taxonomy" id="398741"/>
    <lineage>
        <taxon>Eukaryota</taxon>
        <taxon>Viridiplantae</taxon>
        <taxon>Streptophyta</taxon>
        <taxon>Embryophyta</taxon>
        <taxon>Tracheophyta</taxon>
        <taxon>Spermatophyta</taxon>
        <taxon>Magnoliopsida</taxon>
        <taxon>Magnoliidae</taxon>
        <taxon>Piperales</taxon>
        <taxon>Piperaceae</taxon>
        <taxon>Piper</taxon>
    </lineage>
</organism>
<accession>Q06GS7</accession>
<name>PSBK_PIPCE</name>
<reference key="1">
    <citation type="journal article" date="2006" name="BMC Evol. Biol.">
        <title>Complete plastid genome sequences of Drimys, Liriodendron, and Piper: implications for the phylogenetic relationships of magnoliids.</title>
        <authorList>
            <person name="Cai Z."/>
            <person name="Penaflor C."/>
            <person name="Kuehl J.V."/>
            <person name="Leebens-Mack J."/>
            <person name="Carlson J.E."/>
            <person name="dePamphilis C.W."/>
            <person name="Boore J.L."/>
            <person name="Jansen R.K."/>
        </authorList>
    </citation>
    <scope>NUCLEOTIDE SEQUENCE [LARGE SCALE GENOMIC DNA]</scope>
</reference>
<dbReference type="EMBL" id="DQ887677">
    <property type="protein sequence ID" value="ABI14455.1"/>
    <property type="molecule type" value="Genomic_DNA"/>
</dbReference>
<dbReference type="RefSeq" id="YP_784456.1">
    <property type="nucleotide sequence ID" value="NC_008457.1"/>
</dbReference>
<dbReference type="SMR" id="Q06GS7"/>
<dbReference type="GeneID" id="4363765"/>
<dbReference type="GO" id="GO:0009535">
    <property type="term" value="C:chloroplast thylakoid membrane"/>
    <property type="evidence" value="ECO:0007669"/>
    <property type="project" value="UniProtKB-SubCell"/>
</dbReference>
<dbReference type="GO" id="GO:0009539">
    <property type="term" value="C:photosystem II reaction center"/>
    <property type="evidence" value="ECO:0007669"/>
    <property type="project" value="InterPro"/>
</dbReference>
<dbReference type="GO" id="GO:0015979">
    <property type="term" value="P:photosynthesis"/>
    <property type="evidence" value="ECO:0007669"/>
    <property type="project" value="UniProtKB-UniRule"/>
</dbReference>
<dbReference type="HAMAP" id="MF_00441">
    <property type="entry name" value="PSII_PsbK"/>
    <property type="match status" value="1"/>
</dbReference>
<dbReference type="InterPro" id="IPR003687">
    <property type="entry name" value="PSII_PsbK"/>
</dbReference>
<dbReference type="InterPro" id="IPR037270">
    <property type="entry name" value="PSII_PsbK_sf"/>
</dbReference>
<dbReference type="NCBIfam" id="NF002715">
    <property type="entry name" value="PRK02553.1"/>
    <property type="match status" value="1"/>
</dbReference>
<dbReference type="PANTHER" id="PTHR35325">
    <property type="match status" value="1"/>
</dbReference>
<dbReference type="PANTHER" id="PTHR35325:SF1">
    <property type="entry name" value="PHOTOSYSTEM II REACTION CENTER PROTEIN K"/>
    <property type="match status" value="1"/>
</dbReference>
<dbReference type="Pfam" id="PF02533">
    <property type="entry name" value="PsbK"/>
    <property type="match status" value="1"/>
</dbReference>
<dbReference type="SUPFAM" id="SSF161037">
    <property type="entry name" value="Photosystem II reaction center protein K, PsbK"/>
    <property type="match status" value="1"/>
</dbReference>
<keyword id="KW-0150">Chloroplast</keyword>
<keyword id="KW-0472">Membrane</keyword>
<keyword id="KW-0602">Photosynthesis</keyword>
<keyword id="KW-0604">Photosystem II</keyword>
<keyword id="KW-0934">Plastid</keyword>
<keyword id="KW-0674">Reaction center</keyword>
<keyword id="KW-0793">Thylakoid</keyword>
<keyword id="KW-0812">Transmembrane</keyword>
<keyword id="KW-1133">Transmembrane helix</keyword>
<geneLocation type="chloroplast"/>
<gene>
    <name evidence="1" type="primary">psbK</name>
</gene>